<keyword id="KW-0255">Endonuclease</keyword>
<keyword id="KW-0378">Hydrolase</keyword>
<keyword id="KW-0540">Nuclease</keyword>
<keyword id="KW-1185">Reference proteome</keyword>
<keyword id="KW-0680">Restriction system</keyword>
<name>YDJA_BACSU</name>
<evidence type="ECO:0000269" key="1">
    <source>
    </source>
</evidence>
<evidence type="ECO:0000269" key="2">
    <source>
    </source>
</evidence>
<evidence type="ECO:0000269" key="3">
    <source>
    </source>
</evidence>
<evidence type="ECO:0000303" key="4">
    <source>
    </source>
</evidence>
<organism>
    <name type="scientific">Bacillus subtilis (strain 168)</name>
    <dbReference type="NCBI Taxonomy" id="224308"/>
    <lineage>
        <taxon>Bacteria</taxon>
        <taxon>Bacillati</taxon>
        <taxon>Bacillota</taxon>
        <taxon>Bacilli</taxon>
        <taxon>Bacillales</taxon>
        <taxon>Bacillaceae</taxon>
        <taxon>Bacillus</taxon>
    </lineage>
</organism>
<gene>
    <name type="primary">ydjA</name>
    <name type="ordered locus">BSU06110</name>
</gene>
<proteinExistence type="evidence at protein level"/>
<comment type="function">
    <text evidence="2 3 4">A P subtype restriction enzyme that recognizes the double-stranded sequence 5'-CTCGAG-3'; the cleavage site is unknown.</text>
</comment>
<comment type="catalytic activity">
    <reaction evidence="2">
        <text>Endonucleolytic cleavage of DNA to give specific double-stranded fragments with terminal 5'-phosphates.</text>
        <dbReference type="EC" id="3.1.21.4"/>
    </reaction>
</comment>
<comment type="subunit">
    <text evidence="1">BsuMI restriction activity requires YdiR, YdiS and YdjA.</text>
</comment>
<comment type="developmental stage">
    <text evidence="1">Not expressed during sporulation.</text>
</comment>
<comment type="induction">
    <text evidence="1">Constitutively expressed during exponential growth. Encoded in an operon with ydiR and ydiS.</text>
</comment>
<comment type="disruption phenotype">
    <text evidence="1 3">Not essential; its disruption results in increased transformation by plasmid DNA carrying multiple BsuMI target sequences (PubMed:11751814). Triple deletion ydiO-ydiP-ydjA leads to loss of susceptibility to MspJI, which only digests C-methylated DNA (PubMed:32324221).</text>
</comment>
<protein>
    <recommendedName>
        <fullName evidence="4">Type II restriction enzyme BsuMI component YdjA</fullName>
        <shortName>R.BsuM</shortName>
        <shortName>R.BsuMI</shortName>
        <ecNumber evidence="2">3.1.21.4</ecNumber>
    </recommendedName>
    <alternativeName>
        <fullName>Endonuclease BsuMI component YdjA</fullName>
    </alternativeName>
    <alternativeName>
        <fullName>Type-2 restriction enzyme BsuMI component YdjA</fullName>
    </alternativeName>
</protein>
<feature type="chain" id="PRO_0000379883" description="Type II restriction enzyme BsuMI component YdjA">
    <location>
        <begin position="1"/>
        <end position="465"/>
    </location>
</feature>
<sequence length="465" mass="54336">MDKSSKFFFEDQKYNKERIVRVLGGNLALLKSKGILYEDSSGDLIFNYVGVISNGRNVIFILPKYCNRHLDEHSKRTLFNKLLKIFKKYSGLNKSRESDYFVSELDSDEVSDFMIADYLLNDFSLNGYYQKKFTEYEIDGEGIIDWSKTVNEITPVFSKGVPYYFSTYNEVVQKDEYHLIVKIHKWALSKYFNDFGVILGFTGLEFDKSCDGMKILDYADFFGSVINKEIVNTYVDRDVKLLKALKTAIDREENQFSKRPTLSLYGTKYFHRVWEEVCKTVFSHVNEYVKKISRPNWINFTDIEVNKEKKTLEPDIIKAFEYRSKEYFLILDAKYYNINFDGKKLEGNPGVEDITKQLLYDKALEKLSRGKTKHNAFLFPSSNSTNTFKVFGSVDFDFLDIAAVTLVYISAEQVYNLYLENKTFSTDDLFKFVSEINKSKKRHSVITSTLYGNMFLFTKRLSDKN</sequence>
<dbReference type="EC" id="3.1.21.4" evidence="2"/>
<dbReference type="EMBL" id="AB007637">
    <property type="protein sequence ID" value="BAA22755.1"/>
    <property type="molecule type" value="Genomic_DNA"/>
</dbReference>
<dbReference type="EMBL" id="AL009126">
    <property type="protein sequence ID" value="CAB12430.1"/>
    <property type="molecule type" value="Genomic_DNA"/>
</dbReference>
<dbReference type="PIR" id="E69788">
    <property type="entry name" value="E69788"/>
</dbReference>
<dbReference type="RefSeq" id="WP_003234050.1">
    <property type="nucleotide sequence ID" value="NZ_OZ025638.1"/>
</dbReference>
<dbReference type="FunCoup" id="O34303">
    <property type="interactions" value="60"/>
</dbReference>
<dbReference type="STRING" id="224308.BSU06110"/>
<dbReference type="REBASE" id="156235">
    <property type="entry name" value="Bsu16045ORF661P"/>
</dbReference>
<dbReference type="REBASE" id="162054">
    <property type="entry name" value="R1.BsuBS38ORF585P"/>
</dbReference>
<dbReference type="REBASE" id="619">
    <property type="entry name" value="BsuMI"/>
</dbReference>
<dbReference type="PaxDb" id="224308-BSU06110"/>
<dbReference type="EnsemblBacteria" id="CAB12430">
    <property type="protein sequence ID" value="CAB12430"/>
    <property type="gene ID" value="BSU_06110"/>
</dbReference>
<dbReference type="GeneID" id="939884"/>
<dbReference type="KEGG" id="bsu:BSU06110"/>
<dbReference type="PATRIC" id="fig|224308.179.peg.662"/>
<dbReference type="eggNOG" id="ENOG502ZBUR">
    <property type="taxonomic scope" value="Bacteria"/>
</dbReference>
<dbReference type="InParanoid" id="O34303"/>
<dbReference type="OrthoDB" id="9811025at2"/>
<dbReference type="BioCyc" id="BSUB:BSU06110-MONOMER"/>
<dbReference type="PRO" id="PR:O34303"/>
<dbReference type="Proteomes" id="UP000001570">
    <property type="component" value="Chromosome"/>
</dbReference>
<dbReference type="GO" id="GO:0009036">
    <property type="term" value="F:type II site-specific deoxyribonuclease activity"/>
    <property type="evidence" value="ECO:0007669"/>
    <property type="project" value="UniProtKB-EC"/>
</dbReference>
<dbReference type="GO" id="GO:0009307">
    <property type="term" value="P:DNA restriction-modification system"/>
    <property type="evidence" value="ECO:0007669"/>
    <property type="project" value="UniProtKB-KW"/>
</dbReference>
<dbReference type="InterPro" id="IPR018579">
    <property type="entry name" value="Restrct_endonuc_II_LlaJI"/>
</dbReference>
<dbReference type="Pfam" id="PF09563">
    <property type="entry name" value="RE_LlaJI"/>
    <property type="match status" value="1"/>
</dbReference>
<accession>O34303</accession>
<accession>Q797C8</accession>
<reference key="1">
    <citation type="journal article" date="1997" name="DNA Res.">
        <title>Sequence analysis of the groESL-cotA region of the Bacillus subtilis genome, containing the restriction/modification system genes.</title>
        <authorList>
            <person name="Kasahara Y."/>
            <person name="Nakai S."/>
            <person name="Ogasawara N."/>
            <person name="Yata K."/>
            <person name="Sadaie Y."/>
        </authorList>
    </citation>
    <scope>NUCLEOTIDE SEQUENCE [GENOMIC DNA]</scope>
    <source>
        <strain>168 / Marburg / ATCC 6051 / DSM 10 / JCM 1465 / NBRC 13719 / NCIMB 3610 / NRRL NRS-744 / VKM B-501</strain>
    </source>
</reference>
<reference key="2">
    <citation type="journal article" date="1997" name="Nature">
        <title>The complete genome sequence of the Gram-positive bacterium Bacillus subtilis.</title>
        <authorList>
            <person name="Kunst F."/>
            <person name="Ogasawara N."/>
            <person name="Moszer I."/>
            <person name="Albertini A.M."/>
            <person name="Alloni G."/>
            <person name="Azevedo V."/>
            <person name="Bertero M.G."/>
            <person name="Bessieres P."/>
            <person name="Bolotin A."/>
            <person name="Borchert S."/>
            <person name="Borriss R."/>
            <person name="Boursier L."/>
            <person name="Brans A."/>
            <person name="Braun M."/>
            <person name="Brignell S.C."/>
            <person name="Bron S."/>
            <person name="Brouillet S."/>
            <person name="Bruschi C.V."/>
            <person name="Caldwell B."/>
            <person name="Capuano V."/>
            <person name="Carter N.M."/>
            <person name="Choi S.-K."/>
            <person name="Codani J.-J."/>
            <person name="Connerton I.F."/>
            <person name="Cummings N.J."/>
            <person name="Daniel R.A."/>
            <person name="Denizot F."/>
            <person name="Devine K.M."/>
            <person name="Duesterhoeft A."/>
            <person name="Ehrlich S.D."/>
            <person name="Emmerson P.T."/>
            <person name="Entian K.-D."/>
            <person name="Errington J."/>
            <person name="Fabret C."/>
            <person name="Ferrari E."/>
            <person name="Foulger D."/>
            <person name="Fritz C."/>
            <person name="Fujita M."/>
            <person name="Fujita Y."/>
            <person name="Fuma S."/>
            <person name="Galizzi A."/>
            <person name="Galleron N."/>
            <person name="Ghim S.-Y."/>
            <person name="Glaser P."/>
            <person name="Goffeau A."/>
            <person name="Golightly E.J."/>
            <person name="Grandi G."/>
            <person name="Guiseppi G."/>
            <person name="Guy B.J."/>
            <person name="Haga K."/>
            <person name="Haiech J."/>
            <person name="Harwood C.R."/>
            <person name="Henaut A."/>
            <person name="Hilbert H."/>
            <person name="Holsappel S."/>
            <person name="Hosono S."/>
            <person name="Hullo M.-F."/>
            <person name="Itaya M."/>
            <person name="Jones L.-M."/>
            <person name="Joris B."/>
            <person name="Karamata D."/>
            <person name="Kasahara Y."/>
            <person name="Klaerr-Blanchard M."/>
            <person name="Klein C."/>
            <person name="Kobayashi Y."/>
            <person name="Koetter P."/>
            <person name="Koningstein G."/>
            <person name="Krogh S."/>
            <person name="Kumano M."/>
            <person name="Kurita K."/>
            <person name="Lapidus A."/>
            <person name="Lardinois S."/>
            <person name="Lauber J."/>
            <person name="Lazarevic V."/>
            <person name="Lee S.-M."/>
            <person name="Levine A."/>
            <person name="Liu H."/>
            <person name="Masuda S."/>
            <person name="Mauel C."/>
            <person name="Medigue C."/>
            <person name="Medina N."/>
            <person name="Mellado R.P."/>
            <person name="Mizuno M."/>
            <person name="Moestl D."/>
            <person name="Nakai S."/>
            <person name="Noback M."/>
            <person name="Noone D."/>
            <person name="O'Reilly M."/>
            <person name="Ogawa K."/>
            <person name="Ogiwara A."/>
            <person name="Oudega B."/>
            <person name="Park S.-H."/>
            <person name="Parro V."/>
            <person name="Pohl T.M."/>
            <person name="Portetelle D."/>
            <person name="Porwollik S."/>
            <person name="Prescott A.M."/>
            <person name="Presecan E."/>
            <person name="Pujic P."/>
            <person name="Purnelle B."/>
            <person name="Rapoport G."/>
            <person name="Rey M."/>
            <person name="Reynolds S."/>
            <person name="Rieger M."/>
            <person name="Rivolta C."/>
            <person name="Rocha E."/>
            <person name="Roche B."/>
            <person name="Rose M."/>
            <person name="Sadaie Y."/>
            <person name="Sato T."/>
            <person name="Scanlan E."/>
            <person name="Schleich S."/>
            <person name="Schroeter R."/>
            <person name="Scoffone F."/>
            <person name="Sekiguchi J."/>
            <person name="Sekowska A."/>
            <person name="Seror S.J."/>
            <person name="Serror P."/>
            <person name="Shin B.-S."/>
            <person name="Soldo B."/>
            <person name="Sorokin A."/>
            <person name="Tacconi E."/>
            <person name="Takagi T."/>
            <person name="Takahashi H."/>
            <person name="Takemaru K."/>
            <person name="Takeuchi M."/>
            <person name="Tamakoshi A."/>
            <person name="Tanaka T."/>
            <person name="Terpstra P."/>
            <person name="Tognoni A."/>
            <person name="Tosato V."/>
            <person name="Uchiyama S."/>
            <person name="Vandenbol M."/>
            <person name="Vannier F."/>
            <person name="Vassarotti A."/>
            <person name="Viari A."/>
            <person name="Wambutt R."/>
            <person name="Wedler E."/>
            <person name="Wedler H."/>
            <person name="Weitzenegger T."/>
            <person name="Winters P."/>
            <person name="Wipat A."/>
            <person name="Yamamoto H."/>
            <person name="Yamane K."/>
            <person name="Yasumoto K."/>
            <person name="Yata K."/>
            <person name="Yoshida K."/>
            <person name="Yoshikawa H.-F."/>
            <person name="Zumstein E."/>
            <person name="Yoshikawa H."/>
            <person name="Danchin A."/>
        </authorList>
    </citation>
    <scope>NUCLEOTIDE SEQUENCE [LARGE SCALE GENOMIC DNA]</scope>
    <source>
        <strain>168</strain>
    </source>
</reference>
<reference key="3">
    <citation type="journal article" date="1988" name="Mol. Gen. Genet.">
        <title>Restriction and modification in Bacillus subtilis Marburg 168: target sites and effects on plasmid transformation.</title>
        <authorList>
            <person name="Bron S."/>
            <person name="Janniere L."/>
            <person name="Ehrlich S.D."/>
        </authorList>
    </citation>
    <scope>FUNCTION</scope>
    <scope>DNA TARGET SEQUENCE</scope>
    <source>
        <strain>168 / Marburg / ATCC 6051 / DSM 10 / JCM 1465 / NBRC 13719 / NCIMB 3610 / NRRL NRS-744 / VKM B-501</strain>
    </source>
</reference>
<reference key="4">
    <citation type="journal article" date="2002" name="J. Bacteriol.">
        <title>Molecular organization of intrinsic restriction and modification genes BsuM of Bacillus subtilis Marburg.</title>
        <authorList>
            <person name="Ohshima H."/>
            <person name="Matsuoka S."/>
            <person name="Asai K."/>
            <person name="Sadaie Y."/>
        </authorList>
    </citation>
    <scope>SUBUNIT</scope>
    <scope>DEVELOPMENTAL STAGE</scope>
    <scope>INDUCTION</scope>
    <scope>OPERON STRUCTURE</scope>
    <scope>DISRUPTION PHENOTYPE</scope>
    <source>
        <strain>168 / Marburg / ATCC 6051 / DSM 10 / JCM 1465 / NBRC 13719 / NCIMB 3610 / NRRL NRS-744 / VKM B-501</strain>
    </source>
</reference>
<reference key="5">
    <citation type="journal article" date="2003" name="Nucleic Acids Res.">
        <title>A nomenclature for restriction enzymes, DNA methyltransferases, homing endonucleases and their genes.</title>
        <authorList>
            <person name="Roberts R.J."/>
            <person name="Belfort M."/>
            <person name="Bestor T."/>
            <person name="Bhagwat A.S."/>
            <person name="Bickle T.A."/>
            <person name="Bitinaite J."/>
            <person name="Blumenthal R.M."/>
            <person name="Degtyarev S.K."/>
            <person name="Dryden D.T."/>
            <person name="Dybvig K."/>
            <person name="Firman K."/>
            <person name="Gromova E.S."/>
            <person name="Gumport R.I."/>
            <person name="Halford S.E."/>
            <person name="Hattman S."/>
            <person name="Heitman J."/>
            <person name="Hornby D.P."/>
            <person name="Janulaitis A."/>
            <person name="Jeltsch A."/>
            <person name="Josephsen J."/>
            <person name="Kiss A."/>
            <person name="Klaenhammer T.R."/>
            <person name="Kobayashi I."/>
            <person name="Kong H."/>
            <person name="Krueger D.H."/>
            <person name="Lacks S."/>
            <person name="Marinus M.G."/>
            <person name="Miyahara M."/>
            <person name="Morgan R.D."/>
            <person name="Murray N.E."/>
            <person name="Nagaraja V."/>
            <person name="Piekarowicz A."/>
            <person name="Pingoud A."/>
            <person name="Raleigh E."/>
            <person name="Rao D.N."/>
            <person name="Reich N."/>
            <person name="Repin V.E."/>
            <person name="Selker E.U."/>
            <person name="Shaw P.C."/>
            <person name="Stein D.C."/>
            <person name="Stoddard B.L."/>
            <person name="Szybalski W."/>
            <person name="Trautner T.A."/>
            <person name="Van Etten J.L."/>
            <person name="Vitor J.M."/>
            <person name="Wilson G.G."/>
            <person name="Xu S.Y."/>
        </authorList>
    </citation>
    <scope>NOMENCLATURE</scope>
    <scope>SUBTYPE</scope>
</reference>
<reference key="6">
    <citation type="journal article" date="2020" name="Nucleic Acids Res.">
        <title>Methyltransferase DnmA is responsible for genome-wide N6-methyladenosine modifications at non-palindromic recognition sites in Bacillus subtilis.</title>
        <authorList>
            <person name="Nye T.M."/>
            <person name="van Gijtenbeek L.A."/>
            <person name="Stevens A.G."/>
            <person name="Schroeder J.W."/>
            <person name="Randall J.R."/>
            <person name="Matthews L.A."/>
            <person name="Simmons L.A."/>
        </authorList>
    </citation>
    <scope>FUNCTION</scope>
    <scope>DISRUPTION PHENOTYPE</scope>
    <source>
        <strain>168 / PY79</strain>
    </source>
</reference>